<reference key="1">
    <citation type="journal article" date="2006" name="J. Bacteriol.">
        <title>Pathogenomic sequence analysis of Bacillus cereus and Bacillus thuringiensis isolates closely related to Bacillus anthracis.</title>
        <authorList>
            <person name="Han C.S."/>
            <person name="Xie G."/>
            <person name="Challacombe J.F."/>
            <person name="Altherr M.R."/>
            <person name="Bhotika S.S."/>
            <person name="Bruce D."/>
            <person name="Campbell C.S."/>
            <person name="Campbell M.L."/>
            <person name="Chen J."/>
            <person name="Chertkov O."/>
            <person name="Cleland C."/>
            <person name="Dimitrijevic M."/>
            <person name="Doggett N.A."/>
            <person name="Fawcett J.J."/>
            <person name="Glavina T."/>
            <person name="Goodwin L.A."/>
            <person name="Hill K.K."/>
            <person name="Hitchcock P."/>
            <person name="Jackson P.J."/>
            <person name="Keim P."/>
            <person name="Kewalramani A.R."/>
            <person name="Longmire J."/>
            <person name="Lucas S."/>
            <person name="Malfatti S."/>
            <person name="McMurry K."/>
            <person name="Meincke L.J."/>
            <person name="Misra M."/>
            <person name="Moseman B.L."/>
            <person name="Mundt M."/>
            <person name="Munk A.C."/>
            <person name="Okinaka R.T."/>
            <person name="Parson-Quintana B."/>
            <person name="Reilly L.P."/>
            <person name="Richardson P."/>
            <person name="Robinson D.L."/>
            <person name="Rubin E."/>
            <person name="Saunders E."/>
            <person name="Tapia R."/>
            <person name="Tesmer J.G."/>
            <person name="Thayer N."/>
            <person name="Thompson L.S."/>
            <person name="Tice H."/>
            <person name="Ticknor L.O."/>
            <person name="Wills P.L."/>
            <person name="Brettin T.S."/>
            <person name="Gilna P."/>
        </authorList>
    </citation>
    <scope>NUCLEOTIDE SEQUENCE [LARGE SCALE GENOMIC DNA]</scope>
    <source>
        <strain>97-27</strain>
    </source>
</reference>
<proteinExistence type="inferred from homology"/>
<sequence length="200" mass="23343">MTIRYPNGKRYNQASQPHKTPIKKHTYSNRGMSLEEELNETNEYYLTHNIACVHKKPTPLQIVKVDYPARSAAVVKEAYFKQPSTTDYNGVYKGKYIDFEAKETKNKTSFPLQNFHLHQIEHMKQVIAHNGIAFVIIKFTLFDELYLLDAKHIITFWNRQNTGGRKSITKEEIVEHGSLLSCGYHPRIDYIRVLDTVYFS</sequence>
<comment type="function">
    <text evidence="1">Endonuclease that resolves Holliday junction intermediates in genetic recombination. Cleaves mobile four-strand junctions by introducing symmetrical nicks in paired strands. Promotes annealing of linear ssDNA with homologous dsDNA. Required for DNA repair, homologous recombination and chromosome segregation.</text>
</comment>
<comment type="catalytic activity">
    <reaction evidence="1">
        <text>Endonucleolytic cleavage at a junction such as a reciprocal single-stranded crossover between two homologous DNA duplexes (Holliday junction).</text>
        <dbReference type="EC" id="3.1.21.10"/>
    </reaction>
</comment>
<comment type="cofactor">
    <cofactor evidence="1">
        <name>Mg(2+)</name>
        <dbReference type="ChEBI" id="CHEBI:18420"/>
    </cofactor>
    <text evidence="1">Binds 1 Mg(2+) ion per subunit.</text>
</comment>
<comment type="subcellular location">
    <subcellularLocation>
        <location evidence="1">Cytoplasm</location>
    </subcellularLocation>
</comment>
<comment type="similarity">
    <text evidence="1">Belongs to the RecU family.</text>
</comment>
<protein>
    <recommendedName>
        <fullName evidence="1">Holliday junction resolvase RecU</fullName>
        <ecNumber evidence="1">3.1.21.10</ecNumber>
    </recommendedName>
    <alternativeName>
        <fullName evidence="1">Recombination protein U homolog</fullName>
    </alternativeName>
</protein>
<evidence type="ECO:0000255" key="1">
    <source>
        <dbReference type="HAMAP-Rule" id="MF_00130"/>
    </source>
</evidence>
<evidence type="ECO:0000256" key="2">
    <source>
        <dbReference type="SAM" id="MobiDB-lite"/>
    </source>
</evidence>
<feature type="chain" id="PRO_1000016720" description="Holliday junction resolvase RecU">
    <location>
        <begin position="1"/>
        <end position="200"/>
    </location>
</feature>
<feature type="region of interest" description="Disordered" evidence="2">
    <location>
        <begin position="1"/>
        <end position="25"/>
    </location>
</feature>
<feature type="binding site" evidence="1">
    <location>
        <position position="85"/>
    </location>
    <ligand>
        <name>Mg(2+)</name>
        <dbReference type="ChEBI" id="CHEBI:18420"/>
    </ligand>
</feature>
<feature type="binding site" evidence="1">
    <location>
        <position position="87"/>
    </location>
    <ligand>
        <name>Mg(2+)</name>
        <dbReference type="ChEBI" id="CHEBI:18420"/>
    </ligand>
</feature>
<feature type="binding site" evidence="1">
    <location>
        <position position="100"/>
    </location>
    <ligand>
        <name>Mg(2+)</name>
        <dbReference type="ChEBI" id="CHEBI:18420"/>
    </ligand>
</feature>
<feature type="binding site" evidence="1">
    <location>
        <position position="119"/>
    </location>
    <ligand>
        <name>Mg(2+)</name>
        <dbReference type="ChEBI" id="CHEBI:18420"/>
    </ligand>
</feature>
<feature type="site" description="Transition state stabilizer" evidence="1">
    <location>
        <position position="102"/>
    </location>
</feature>
<gene>
    <name evidence="1" type="primary">recU</name>
    <name type="ordered locus">BT9727_1431</name>
</gene>
<accession>Q6HL06</accession>
<keyword id="KW-0963">Cytoplasm</keyword>
<keyword id="KW-0227">DNA damage</keyword>
<keyword id="KW-0233">DNA recombination</keyword>
<keyword id="KW-0234">DNA repair</keyword>
<keyword id="KW-0255">Endonuclease</keyword>
<keyword id="KW-0378">Hydrolase</keyword>
<keyword id="KW-0460">Magnesium</keyword>
<keyword id="KW-0479">Metal-binding</keyword>
<keyword id="KW-0540">Nuclease</keyword>
<organism>
    <name type="scientific">Bacillus thuringiensis subsp. konkukian (strain 97-27)</name>
    <dbReference type="NCBI Taxonomy" id="281309"/>
    <lineage>
        <taxon>Bacteria</taxon>
        <taxon>Bacillati</taxon>
        <taxon>Bacillota</taxon>
        <taxon>Bacilli</taxon>
        <taxon>Bacillales</taxon>
        <taxon>Bacillaceae</taxon>
        <taxon>Bacillus</taxon>
        <taxon>Bacillus cereus group</taxon>
    </lineage>
</organism>
<dbReference type="EC" id="3.1.21.10" evidence="1"/>
<dbReference type="EMBL" id="AE017355">
    <property type="protein sequence ID" value="AAT63191.1"/>
    <property type="molecule type" value="Genomic_DNA"/>
</dbReference>
<dbReference type="RefSeq" id="WP_000155594.1">
    <property type="nucleotide sequence ID" value="NC_005957.1"/>
</dbReference>
<dbReference type="RefSeq" id="YP_035765.1">
    <property type="nucleotide sequence ID" value="NC_005957.1"/>
</dbReference>
<dbReference type="SMR" id="Q6HL06"/>
<dbReference type="GeneID" id="45021545"/>
<dbReference type="KEGG" id="btk:BT9727_1431"/>
<dbReference type="PATRIC" id="fig|281309.8.peg.1504"/>
<dbReference type="HOGENOM" id="CLU_096340_0_0_9"/>
<dbReference type="Proteomes" id="UP000001301">
    <property type="component" value="Chromosome"/>
</dbReference>
<dbReference type="GO" id="GO:0005737">
    <property type="term" value="C:cytoplasm"/>
    <property type="evidence" value="ECO:0007669"/>
    <property type="project" value="UniProtKB-SubCell"/>
</dbReference>
<dbReference type="GO" id="GO:0004519">
    <property type="term" value="F:endonuclease activity"/>
    <property type="evidence" value="ECO:0007669"/>
    <property type="project" value="UniProtKB-UniRule"/>
</dbReference>
<dbReference type="GO" id="GO:0000287">
    <property type="term" value="F:magnesium ion binding"/>
    <property type="evidence" value="ECO:0007669"/>
    <property type="project" value="UniProtKB-UniRule"/>
</dbReference>
<dbReference type="GO" id="GO:0003676">
    <property type="term" value="F:nucleic acid binding"/>
    <property type="evidence" value="ECO:0007669"/>
    <property type="project" value="InterPro"/>
</dbReference>
<dbReference type="GO" id="GO:0007059">
    <property type="term" value="P:chromosome segregation"/>
    <property type="evidence" value="ECO:0007669"/>
    <property type="project" value="UniProtKB-UniRule"/>
</dbReference>
<dbReference type="GO" id="GO:0006310">
    <property type="term" value="P:DNA recombination"/>
    <property type="evidence" value="ECO:0007669"/>
    <property type="project" value="UniProtKB-UniRule"/>
</dbReference>
<dbReference type="GO" id="GO:0006281">
    <property type="term" value="P:DNA repair"/>
    <property type="evidence" value="ECO:0007669"/>
    <property type="project" value="UniProtKB-UniRule"/>
</dbReference>
<dbReference type="CDD" id="cd22354">
    <property type="entry name" value="RecU-like"/>
    <property type="match status" value="1"/>
</dbReference>
<dbReference type="Gene3D" id="3.40.1350.10">
    <property type="match status" value="1"/>
</dbReference>
<dbReference type="HAMAP" id="MF_00130">
    <property type="entry name" value="RecU"/>
    <property type="match status" value="1"/>
</dbReference>
<dbReference type="InterPro" id="IPR004612">
    <property type="entry name" value="Resolv_RecU"/>
</dbReference>
<dbReference type="InterPro" id="IPR011335">
    <property type="entry name" value="Restrct_endonuc-II-like"/>
</dbReference>
<dbReference type="InterPro" id="IPR011856">
    <property type="entry name" value="tRNA_endonuc-like_dom_sf"/>
</dbReference>
<dbReference type="NCBIfam" id="NF002581">
    <property type="entry name" value="PRK02234.1-2"/>
    <property type="match status" value="1"/>
</dbReference>
<dbReference type="NCBIfam" id="NF002584">
    <property type="entry name" value="PRK02234.1-5"/>
    <property type="match status" value="1"/>
</dbReference>
<dbReference type="NCBIfam" id="NF002585">
    <property type="entry name" value="PRK02234.1-6"/>
    <property type="match status" value="1"/>
</dbReference>
<dbReference type="NCBIfam" id="TIGR00648">
    <property type="entry name" value="recU"/>
    <property type="match status" value="1"/>
</dbReference>
<dbReference type="Pfam" id="PF03838">
    <property type="entry name" value="RecU"/>
    <property type="match status" value="1"/>
</dbReference>
<dbReference type="PIRSF" id="PIRSF037785">
    <property type="entry name" value="RecU"/>
    <property type="match status" value="1"/>
</dbReference>
<dbReference type="SUPFAM" id="SSF52980">
    <property type="entry name" value="Restriction endonuclease-like"/>
    <property type="match status" value="1"/>
</dbReference>
<name>RECU_BACHK</name>